<accession>Q92C35</accession>
<name>SYP_LISIN</name>
<organism>
    <name type="scientific">Listeria innocua serovar 6a (strain ATCC BAA-680 / CLIP 11262)</name>
    <dbReference type="NCBI Taxonomy" id="272626"/>
    <lineage>
        <taxon>Bacteria</taxon>
        <taxon>Bacillati</taxon>
        <taxon>Bacillota</taxon>
        <taxon>Bacilli</taxon>
        <taxon>Bacillales</taxon>
        <taxon>Listeriaceae</taxon>
        <taxon>Listeria</taxon>
    </lineage>
</organism>
<feature type="chain" id="PRO_0000248718" description="Proline--tRNA ligase">
    <location>
        <begin position="1"/>
        <end position="568"/>
    </location>
</feature>
<comment type="function">
    <text evidence="1">Catalyzes the attachment of proline to tRNA(Pro) in a two-step reaction: proline is first activated by ATP to form Pro-AMP and then transferred to the acceptor end of tRNA(Pro). As ProRS can inadvertently accommodate and process non-cognate amino acids such as alanine and cysteine, to avoid such errors it has two additional distinct editing activities against alanine. One activity is designated as 'pretransfer' editing and involves the tRNA(Pro)-independent hydrolysis of activated Ala-AMP. The other activity is designated 'posttransfer' editing and involves deacylation of mischarged Ala-tRNA(Pro). The misacylated Cys-tRNA(Pro) is not edited by ProRS.</text>
</comment>
<comment type="catalytic activity">
    <reaction evidence="1">
        <text>tRNA(Pro) + L-proline + ATP = L-prolyl-tRNA(Pro) + AMP + diphosphate</text>
        <dbReference type="Rhea" id="RHEA:14305"/>
        <dbReference type="Rhea" id="RHEA-COMP:9700"/>
        <dbReference type="Rhea" id="RHEA-COMP:9702"/>
        <dbReference type="ChEBI" id="CHEBI:30616"/>
        <dbReference type="ChEBI" id="CHEBI:33019"/>
        <dbReference type="ChEBI" id="CHEBI:60039"/>
        <dbReference type="ChEBI" id="CHEBI:78442"/>
        <dbReference type="ChEBI" id="CHEBI:78532"/>
        <dbReference type="ChEBI" id="CHEBI:456215"/>
        <dbReference type="EC" id="6.1.1.15"/>
    </reaction>
</comment>
<comment type="subunit">
    <text evidence="1">Homodimer.</text>
</comment>
<comment type="subcellular location">
    <subcellularLocation>
        <location evidence="1">Cytoplasm</location>
    </subcellularLocation>
</comment>
<comment type="domain">
    <text evidence="1">Consists of three domains: the N-terminal catalytic domain, the editing domain and the C-terminal anticodon-binding domain.</text>
</comment>
<comment type="similarity">
    <text evidence="1">Belongs to the class-II aminoacyl-tRNA synthetase family. ProS type 1 subfamily.</text>
</comment>
<protein>
    <recommendedName>
        <fullName evidence="1">Proline--tRNA ligase</fullName>
        <ecNumber evidence="1">6.1.1.15</ecNumber>
    </recommendedName>
    <alternativeName>
        <fullName evidence="1">Prolyl-tRNA synthetase</fullName>
        <shortName evidence="1">ProRS</shortName>
    </alternativeName>
</protein>
<sequence>MRQTMTFIPTLKEVPADAEVKSHQLLLRAGFIRQVASGIYSYLPLATLTLRKIEAIVREELEAIGAAEMLMPALQPAELWHESGRWADYGPELMRLKDRAARDFVLGPTHEELITSLLRDEIKSYKRLPITLYQIQTKFRDEKRPRFGLLRGREFIMKDAYSFHATSESLDETFELMHQAYSNIFSRCGLEFRSVIADSGSIGGNESKEFMALSDIGEDTIAYSDASDYAANTEMAPVLYMEKKSHELEKELEKVATENQKTIADIVEFLEVPIEKTMKSMLYQVDEEVIMVLVRGDHEVNDIKIKNALDATNVELVDPNVAFELLGANFGSLGPIGVPEKIRVFADNAVKGIVNAVAGANEDGYHYVNVNPNRDFEVTSYFDLRMIQAGDLSPDGQGVIKFAEGIEVGHIFKLGTKYSEAMNATILDENGRAQPIIMGCYGIGLSRILSAIAEQSNDENGLVWDKQISPFDLHLIPVNMKSEEQVAFAESLYDSLQKAGFSVLIDDRTERAGVKFADADLIGLPIRITVGKKAAEGIVEVKIRKTGEMIEVRQDELLNTLPILFGDK</sequence>
<dbReference type="EC" id="6.1.1.15" evidence="1"/>
<dbReference type="EMBL" id="AL596168">
    <property type="protein sequence ID" value="CAC96587.1"/>
    <property type="molecule type" value="Genomic_DNA"/>
</dbReference>
<dbReference type="PIR" id="AC1602">
    <property type="entry name" value="AC1602"/>
</dbReference>
<dbReference type="RefSeq" id="WP_010991495.1">
    <property type="nucleotide sequence ID" value="NC_003212.1"/>
</dbReference>
<dbReference type="SMR" id="Q92C35"/>
<dbReference type="STRING" id="272626.gene:17565687"/>
<dbReference type="KEGG" id="lin:proS"/>
<dbReference type="eggNOG" id="COG0442">
    <property type="taxonomic scope" value="Bacteria"/>
</dbReference>
<dbReference type="HOGENOM" id="CLU_016739_0_0_9"/>
<dbReference type="OrthoDB" id="9809052at2"/>
<dbReference type="Proteomes" id="UP000002513">
    <property type="component" value="Chromosome"/>
</dbReference>
<dbReference type="GO" id="GO:0005829">
    <property type="term" value="C:cytosol"/>
    <property type="evidence" value="ECO:0007669"/>
    <property type="project" value="TreeGrafter"/>
</dbReference>
<dbReference type="GO" id="GO:0002161">
    <property type="term" value="F:aminoacyl-tRNA deacylase activity"/>
    <property type="evidence" value="ECO:0007669"/>
    <property type="project" value="InterPro"/>
</dbReference>
<dbReference type="GO" id="GO:0005524">
    <property type="term" value="F:ATP binding"/>
    <property type="evidence" value="ECO:0007669"/>
    <property type="project" value="UniProtKB-UniRule"/>
</dbReference>
<dbReference type="GO" id="GO:0140096">
    <property type="term" value="F:catalytic activity, acting on a protein"/>
    <property type="evidence" value="ECO:0007669"/>
    <property type="project" value="UniProtKB-ARBA"/>
</dbReference>
<dbReference type="GO" id="GO:0004827">
    <property type="term" value="F:proline-tRNA ligase activity"/>
    <property type="evidence" value="ECO:0007669"/>
    <property type="project" value="UniProtKB-UniRule"/>
</dbReference>
<dbReference type="GO" id="GO:0016740">
    <property type="term" value="F:transferase activity"/>
    <property type="evidence" value="ECO:0007669"/>
    <property type="project" value="UniProtKB-ARBA"/>
</dbReference>
<dbReference type="GO" id="GO:0006433">
    <property type="term" value="P:prolyl-tRNA aminoacylation"/>
    <property type="evidence" value="ECO:0007669"/>
    <property type="project" value="UniProtKB-UniRule"/>
</dbReference>
<dbReference type="CDD" id="cd04334">
    <property type="entry name" value="ProRS-INS"/>
    <property type="match status" value="1"/>
</dbReference>
<dbReference type="CDD" id="cd00861">
    <property type="entry name" value="ProRS_anticodon_short"/>
    <property type="match status" value="1"/>
</dbReference>
<dbReference type="CDD" id="cd00779">
    <property type="entry name" value="ProRS_core_prok"/>
    <property type="match status" value="1"/>
</dbReference>
<dbReference type="FunFam" id="3.30.930.10:FF:000043">
    <property type="entry name" value="Proline--tRNA ligase"/>
    <property type="match status" value="1"/>
</dbReference>
<dbReference type="FunFam" id="3.30.930.10:FF:000088">
    <property type="entry name" value="Proline--tRNA ligase"/>
    <property type="match status" value="1"/>
</dbReference>
<dbReference type="FunFam" id="3.40.50.800:FF:000011">
    <property type="entry name" value="Proline--tRNA ligase"/>
    <property type="match status" value="1"/>
</dbReference>
<dbReference type="Gene3D" id="3.40.50.800">
    <property type="entry name" value="Anticodon-binding domain"/>
    <property type="match status" value="1"/>
</dbReference>
<dbReference type="Gene3D" id="3.30.930.10">
    <property type="entry name" value="Bira Bifunctional Protein, Domain 2"/>
    <property type="match status" value="2"/>
</dbReference>
<dbReference type="HAMAP" id="MF_01569">
    <property type="entry name" value="Pro_tRNA_synth_type1"/>
    <property type="match status" value="1"/>
</dbReference>
<dbReference type="InterPro" id="IPR002314">
    <property type="entry name" value="aa-tRNA-synt_IIb"/>
</dbReference>
<dbReference type="InterPro" id="IPR006195">
    <property type="entry name" value="aa-tRNA-synth_II"/>
</dbReference>
<dbReference type="InterPro" id="IPR045864">
    <property type="entry name" value="aa-tRNA-synth_II/BPL/LPL"/>
</dbReference>
<dbReference type="InterPro" id="IPR004154">
    <property type="entry name" value="Anticodon-bd"/>
</dbReference>
<dbReference type="InterPro" id="IPR036621">
    <property type="entry name" value="Anticodon-bd_dom_sf"/>
</dbReference>
<dbReference type="InterPro" id="IPR002316">
    <property type="entry name" value="Pro-tRNA-ligase_IIa"/>
</dbReference>
<dbReference type="InterPro" id="IPR004500">
    <property type="entry name" value="Pro-tRNA-synth_IIa_bac-type"/>
</dbReference>
<dbReference type="InterPro" id="IPR023717">
    <property type="entry name" value="Pro-tRNA-Synthase_IIa_type1"/>
</dbReference>
<dbReference type="InterPro" id="IPR050062">
    <property type="entry name" value="Pro-tRNA_synthetase"/>
</dbReference>
<dbReference type="InterPro" id="IPR044140">
    <property type="entry name" value="ProRS_anticodon_short"/>
</dbReference>
<dbReference type="InterPro" id="IPR033730">
    <property type="entry name" value="ProRS_core_prok"/>
</dbReference>
<dbReference type="InterPro" id="IPR036754">
    <property type="entry name" value="YbaK/aa-tRNA-synt-asso_dom_sf"/>
</dbReference>
<dbReference type="InterPro" id="IPR007214">
    <property type="entry name" value="YbaK/aa-tRNA-synth-assoc-dom"/>
</dbReference>
<dbReference type="NCBIfam" id="NF006625">
    <property type="entry name" value="PRK09194.1"/>
    <property type="match status" value="1"/>
</dbReference>
<dbReference type="NCBIfam" id="TIGR00409">
    <property type="entry name" value="proS_fam_II"/>
    <property type="match status" value="1"/>
</dbReference>
<dbReference type="PANTHER" id="PTHR42753">
    <property type="entry name" value="MITOCHONDRIAL RIBOSOME PROTEIN L39/PROLYL-TRNA LIGASE FAMILY MEMBER"/>
    <property type="match status" value="1"/>
</dbReference>
<dbReference type="PANTHER" id="PTHR42753:SF2">
    <property type="entry name" value="PROLINE--TRNA LIGASE"/>
    <property type="match status" value="1"/>
</dbReference>
<dbReference type="Pfam" id="PF03129">
    <property type="entry name" value="HGTP_anticodon"/>
    <property type="match status" value="1"/>
</dbReference>
<dbReference type="Pfam" id="PF00587">
    <property type="entry name" value="tRNA-synt_2b"/>
    <property type="match status" value="1"/>
</dbReference>
<dbReference type="Pfam" id="PF04073">
    <property type="entry name" value="tRNA_edit"/>
    <property type="match status" value="1"/>
</dbReference>
<dbReference type="PIRSF" id="PIRSF001535">
    <property type="entry name" value="ProRS_1"/>
    <property type="match status" value="1"/>
</dbReference>
<dbReference type="PRINTS" id="PR01046">
    <property type="entry name" value="TRNASYNTHPRO"/>
</dbReference>
<dbReference type="SUPFAM" id="SSF52954">
    <property type="entry name" value="Class II aaRS ABD-related"/>
    <property type="match status" value="1"/>
</dbReference>
<dbReference type="SUPFAM" id="SSF55681">
    <property type="entry name" value="Class II aaRS and biotin synthetases"/>
    <property type="match status" value="1"/>
</dbReference>
<dbReference type="SUPFAM" id="SSF55826">
    <property type="entry name" value="YbaK/ProRS associated domain"/>
    <property type="match status" value="1"/>
</dbReference>
<dbReference type="PROSITE" id="PS50862">
    <property type="entry name" value="AA_TRNA_LIGASE_II"/>
    <property type="match status" value="1"/>
</dbReference>
<reference key="1">
    <citation type="journal article" date="2001" name="Science">
        <title>Comparative genomics of Listeria species.</title>
        <authorList>
            <person name="Glaser P."/>
            <person name="Frangeul L."/>
            <person name="Buchrieser C."/>
            <person name="Rusniok C."/>
            <person name="Amend A."/>
            <person name="Baquero F."/>
            <person name="Berche P."/>
            <person name="Bloecker H."/>
            <person name="Brandt P."/>
            <person name="Chakraborty T."/>
            <person name="Charbit A."/>
            <person name="Chetouani F."/>
            <person name="Couve E."/>
            <person name="de Daruvar A."/>
            <person name="Dehoux P."/>
            <person name="Domann E."/>
            <person name="Dominguez-Bernal G."/>
            <person name="Duchaud E."/>
            <person name="Durant L."/>
            <person name="Dussurget O."/>
            <person name="Entian K.-D."/>
            <person name="Fsihi H."/>
            <person name="Garcia-del Portillo F."/>
            <person name="Garrido P."/>
            <person name="Gautier L."/>
            <person name="Goebel W."/>
            <person name="Gomez-Lopez N."/>
            <person name="Hain T."/>
            <person name="Hauf J."/>
            <person name="Jackson D."/>
            <person name="Jones L.-M."/>
            <person name="Kaerst U."/>
            <person name="Kreft J."/>
            <person name="Kuhn M."/>
            <person name="Kunst F."/>
            <person name="Kurapkat G."/>
            <person name="Madueno E."/>
            <person name="Maitournam A."/>
            <person name="Mata Vicente J."/>
            <person name="Ng E."/>
            <person name="Nedjari H."/>
            <person name="Nordsiek G."/>
            <person name="Novella S."/>
            <person name="de Pablos B."/>
            <person name="Perez-Diaz J.-C."/>
            <person name="Purcell R."/>
            <person name="Remmel B."/>
            <person name="Rose M."/>
            <person name="Schlueter T."/>
            <person name="Simoes N."/>
            <person name="Tierrez A."/>
            <person name="Vazquez-Boland J.-A."/>
            <person name="Voss H."/>
            <person name="Wehland J."/>
            <person name="Cossart P."/>
        </authorList>
    </citation>
    <scope>NUCLEOTIDE SEQUENCE [LARGE SCALE GENOMIC DNA]</scope>
    <source>
        <strain>ATCC BAA-680 / CLIP 11262</strain>
    </source>
</reference>
<evidence type="ECO:0000255" key="1">
    <source>
        <dbReference type="HAMAP-Rule" id="MF_01569"/>
    </source>
</evidence>
<gene>
    <name evidence="1" type="primary">proS</name>
    <name type="ordered locus">lin1356</name>
</gene>
<keyword id="KW-0030">Aminoacyl-tRNA synthetase</keyword>
<keyword id="KW-0067">ATP-binding</keyword>
<keyword id="KW-0963">Cytoplasm</keyword>
<keyword id="KW-0436">Ligase</keyword>
<keyword id="KW-0547">Nucleotide-binding</keyword>
<keyword id="KW-0648">Protein biosynthesis</keyword>
<proteinExistence type="inferred from homology"/>